<dbReference type="EMBL" id="AB183264">
    <property type="protein sequence ID" value="BAD83848.1"/>
    <property type="molecule type" value="mRNA"/>
</dbReference>
<dbReference type="EMBL" id="AAFI02000047">
    <property type="protein sequence ID" value="EAS66870.1"/>
    <property type="molecule type" value="Genomic_DNA"/>
</dbReference>
<dbReference type="RefSeq" id="XP_001134553.1">
    <property type="nucleotide sequence ID" value="XM_001134553.1"/>
</dbReference>
<dbReference type="SMR" id="Q5KSV0"/>
<dbReference type="FunCoup" id="Q5KSV0">
    <property type="interactions" value="161"/>
</dbReference>
<dbReference type="STRING" id="44689.Q5KSV0"/>
<dbReference type="PaxDb" id="44689-DDB0232953"/>
<dbReference type="EnsemblProtists" id="EAS66870">
    <property type="protein sequence ID" value="EAS66870"/>
    <property type="gene ID" value="DDB_G0282811"/>
</dbReference>
<dbReference type="GeneID" id="8623761"/>
<dbReference type="KEGG" id="ddi:DDB_G0282811"/>
<dbReference type="dictyBase" id="DDB_G0282811">
    <property type="gene designation" value="gtaK"/>
</dbReference>
<dbReference type="VEuPathDB" id="AmoebaDB:DDB_G0282811"/>
<dbReference type="eggNOG" id="KOG1601">
    <property type="taxonomic scope" value="Eukaryota"/>
</dbReference>
<dbReference type="HOGENOM" id="CLU_421770_0_0_1"/>
<dbReference type="InParanoid" id="Q5KSV0"/>
<dbReference type="OMA" id="QISSHMI"/>
<dbReference type="PRO" id="PR:Q5KSV0"/>
<dbReference type="Proteomes" id="UP000002195">
    <property type="component" value="Chromosome 3"/>
</dbReference>
<dbReference type="GO" id="GO:0005634">
    <property type="term" value="C:nucleus"/>
    <property type="evidence" value="ECO:0000318"/>
    <property type="project" value="GO_Central"/>
</dbReference>
<dbReference type="GO" id="GO:0000976">
    <property type="term" value="F:transcription cis-regulatory region binding"/>
    <property type="evidence" value="ECO:0000318"/>
    <property type="project" value="GO_Central"/>
</dbReference>
<dbReference type="GO" id="GO:0008270">
    <property type="term" value="F:zinc ion binding"/>
    <property type="evidence" value="ECO:0007669"/>
    <property type="project" value="UniProtKB-KW"/>
</dbReference>
<dbReference type="GO" id="GO:0006357">
    <property type="term" value="P:regulation of transcription by RNA polymerase II"/>
    <property type="evidence" value="ECO:0000318"/>
    <property type="project" value="GO_Central"/>
</dbReference>
<dbReference type="CDD" id="cd00202">
    <property type="entry name" value="ZnF_GATA"/>
    <property type="match status" value="1"/>
</dbReference>
<dbReference type="Gene3D" id="3.30.50.10">
    <property type="entry name" value="Erythroid Transcription Factor GATA-1, subunit A"/>
    <property type="match status" value="1"/>
</dbReference>
<dbReference type="InterPro" id="IPR000679">
    <property type="entry name" value="Znf_GATA"/>
</dbReference>
<dbReference type="InterPro" id="IPR013088">
    <property type="entry name" value="Znf_NHR/GATA"/>
</dbReference>
<dbReference type="PANTHER" id="PTHR20916">
    <property type="entry name" value="CYSTEINE AND GLYCINE-RICH PROTEIN 2 BINDING PROTEIN"/>
    <property type="match status" value="1"/>
</dbReference>
<dbReference type="PANTHER" id="PTHR20916:SF18">
    <property type="entry name" value="IPT_TIG DOMAIN-CONTAINING PROTEIN"/>
    <property type="match status" value="1"/>
</dbReference>
<dbReference type="Pfam" id="PF00320">
    <property type="entry name" value="GATA"/>
    <property type="match status" value="1"/>
</dbReference>
<dbReference type="SMART" id="SM00401">
    <property type="entry name" value="ZnF_GATA"/>
    <property type="match status" value="1"/>
</dbReference>
<dbReference type="SUPFAM" id="SSF57716">
    <property type="entry name" value="Glucocorticoid receptor-like (DNA-binding domain)"/>
    <property type="match status" value="1"/>
</dbReference>
<dbReference type="PROSITE" id="PS00344">
    <property type="entry name" value="GATA_ZN_FINGER_1"/>
    <property type="match status" value="1"/>
</dbReference>
<dbReference type="PROSITE" id="PS50114">
    <property type="entry name" value="GATA_ZN_FINGER_2"/>
    <property type="match status" value="1"/>
</dbReference>
<accession>Q5KSV0</accession>
<accession>Q1ZXG0</accession>
<comment type="function">
    <text evidence="3">Transcription factor that regulates morphogenetic cell movement during development.</text>
</comment>
<proteinExistence type="evidence at transcript level"/>
<feature type="chain" id="PRO_0000330444" description="GATA zinc finger domain-containing protein 11">
    <location>
        <begin position="1"/>
        <end position="650"/>
    </location>
</feature>
<feature type="zinc finger region" description="GATA-type" evidence="1">
    <location>
        <begin position="522"/>
        <end position="547"/>
    </location>
</feature>
<feature type="region of interest" description="Disordered" evidence="2">
    <location>
        <begin position="16"/>
        <end position="96"/>
    </location>
</feature>
<feature type="region of interest" description="Disordered" evidence="2">
    <location>
        <begin position="111"/>
        <end position="181"/>
    </location>
</feature>
<feature type="region of interest" description="Disordered" evidence="2">
    <location>
        <begin position="221"/>
        <end position="335"/>
    </location>
</feature>
<feature type="region of interest" description="Disordered" evidence="2">
    <location>
        <begin position="409"/>
        <end position="515"/>
    </location>
</feature>
<feature type="region of interest" description="Disordered" evidence="2">
    <location>
        <begin position="619"/>
        <end position="650"/>
    </location>
</feature>
<feature type="compositionally biased region" description="Low complexity" evidence="2">
    <location>
        <begin position="16"/>
        <end position="79"/>
    </location>
</feature>
<feature type="compositionally biased region" description="Polar residues" evidence="2">
    <location>
        <begin position="116"/>
        <end position="129"/>
    </location>
</feature>
<feature type="compositionally biased region" description="Low complexity" evidence="2">
    <location>
        <begin position="130"/>
        <end position="180"/>
    </location>
</feature>
<feature type="compositionally biased region" description="Low complexity" evidence="2">
    <location>
        <begin position="221"/>
        <end position="260"/>
    </location>
</feature>
<feature type="compositionally biased region" description="Polar residues" evidence="2">
    <location>
        <begin position="261"/>
        <end position="272"/>
    </location>
</feature>
<feature type="compositionally biased region" description="Low complexity" evidence="2">
    <location>
        <begin position="273"/>
        <end position="334"/>
    </location>
</feature>
<feature type="compositionally biased region" description="Basic residues" evidence="2">
    <location>
        <begin position="425"/>
        <end position="434"/>
    </location>
</feature>
<feature type="compositionally biased region" description="Low complexity" evidence="2">
    <location>
        <begin position="442"/>
        <end position="511"/>
    </location>
</feature>
<organism>
    <name type="scientific">Dictyostelium discoideum</name>
    <name type="common">Social amoeba</name>
    <dbReference type="NCBI Taxonomy" id="44689"/>
    <lineage>
        <taxon>Eukaryota</taxon>
        <taxon>Amoebozoa</taxon>
        <taxon>Evosea</taxon>
        <taxon>Eumycetozoa</taxon>
        <taxon>Dictyostelia</taxon>
        <taxon>Dictyosteliales</taxon>
        <taxon>Dictyosteliaceae</taxon>
        <taxon>Dictyostelium</taxon>
    </lineage>
</organism>
<keyword id="KW-0479">Metal-binding</keyword>
<keyword id="KW-1185">Reference proteome</keyword>
<keyword id="KW-0804">Transcription</keyword>
<keyword id="KW-0805">Transcription regulation</keyword>
<keyword id="KW-0862">Zinc</keyword>
<keyword id="KW-0863">Zinc-finger</keyword>
<reference key="1">
    <citation type="submission" date="2004-07" db="EMBL/GenBank/DDBJ databases">
        <title>A transcription factor gene amvA regulates morphogenetic cell movement during development in Dictyostelium discoideum.</title>
        <authorList>
            <person name="Morio T."/>
            <person name="Uchida K.S."/>
            <person name="Kuwayama H."/>
            <person name="Obara S."/>
            <person name="Katoh M."/>
            <person name="Yoshino R."/>
            <person name="Tashiro K."/>
            <person name="Kuhara S."/>
            <person name="Tanaka Y."/>
            <person name="Urushihara H."/>
        </authorList>
    </citation>
    <scope>NUCLEOTIDE SEQUENCE [MRNA]</scope>
    <scope>FUNCTION</scope>
    <source>
        <strain>AX4</strain>
    </source>
</reference>
<reference key="2">
    <citation type="journal article" date="2005" name="Nature">
        <title>The genome of the social amoeba Dictyostelium discoideum.</title>
        <authorList>
            <person name="Eichinger L."/>
            <person name="Pachebat J.A."/>
            <person name="Gloeckner G."/>
            <person name="Rajandream M.A."/>
            <person name="Sucgang R."/>
            <person name="Berriman M."/>
            <person name="Song J."/>
            <person name="Olsen R."/>
            <person name="Szafranski K."/>
            <person name="Xu Q."/>
            <person name="Tunggal B."/>
            <person name="Kummerfeld S."/>
            <person name="Madera M."/>
            <person name="Konfortov B.A."/>
            <person name="Rivero F."/>
            <person name="Bankier A.T."/>
            <person name="Lehmann R."/>
            <person name="Hamlin N."/>
            <person name="Davies R."/>
            <person name="Gaudet P."/>
            <person name="Fey P."/>
            <person name="Pilcher K."/>
            <person name="Chen G."/>
            <person name="Saunders D."/>
            <person name="Sodergren E.J."/>
            <person name="Davis P."/>
            <person name="Kerhornou A."/>
            <person name="Nie X."/>
            <person name="Hall N."/>
            <person name="Anjard C."/>
            <person name="Hemphill L."/>
            <person name="Bason N."/>
            <person name="Farbrother P."/>
            <person name="Desany B."/>
            <person name="Just E."/>
            <person name="Morio T."/>
            <person name="Rost R."/>
            <person name="Churcher C.M."/>
            <person name="Cooper J."/>
            <person name="Haydock S."/>
            <person name="van Driessche N."/>
            <person name="Cronin A."/>
            <person name="Goodhead I."/>
            <person name="Muzny D.M."/>
            <person name="Mourier T."/>
            <person name="Pain A."/>
            <person name="Lu M."/>
            <person name="Harper D."/>
            <person name="Lindsay R."/>
            <person name="Hauser H."/>
            <person name="James K.D."/>
            <person name="Quiles M."/>
            <person name="Madan Babu M."/>
            <person name="Saito T."/>
            <person name="Buchrieser C."/>
            <person name="Wardroper A."/>
            <person name="Felder M."/>
            <person name="Thangavelu M."/>
            <person name="Johnson D."/>
            <person name="Knights A."/>
            <person name="Loulseged H."/>
            <person name="Mungall K.L."/>
            <person name="Oliver K."/>
            <person name="Price C."/>
            <person name="Quail M.A."/>
            <person name="Urushihara H."/>
            <person name="Hernandez J."/>
            <person name="Rabbinowitsch E."/>
            <person name="Steffen D."/>
            <person name="Sanders M."/>
            <person name="Ma J."/>
            <person name="Kohara Y."/>
            <person name="Sharp S."/>
            <person name="Simmonds M.N."/>
            <person name="Spiegler S."/>
            <person name="Tivey A."/>
            <person name="Sugano S."/>
            <person name="White B."/>
            <person name="Walker D."/>
            <person name="Woodward J.R."/>
            <person name="Winckler T."/>
            <person name="Tanaka Y."/>
            <person name="Shaulsky G."/>
            <person name="Schleicher M."/>
            <person name="Weinstock G.M."/>
            <person name="Rosenthal A."/>
            <person name="Cox E.C."/>
            <person name="Chisholm R.L."/>
            <person name="Gibbs R.A."/>
            <person name="Loomis W.F."/>
            <person name="Platzer M."/>
            <person name="Kay R.R."/>
            <person name="Williams J.G."/>
            <person name="Dear P.H."/>
            <person name="Noegel A.A."/>
            <person name="Barrell B.G."/>
            <person name="Kuspa A."/>
        </authorList>
    </citation>
    <scope>NUCLEOTIDE SEQUENCE [LARGE SCALE GENOMIC DNA]</scope>
    <source>
        <strain>AX4</strain>
    </source>
</reference>
<name>GTAK_DICDI</name>
<evidence type="ECO:0000255" key="1">
    <source>
        <dbReference type="PROSITE-ProRule" id="PRU00094"/>
    </source>
</evidence>
<evidence type="ECO:0000256" key="2">
    <source>
        <dbReference type="SAM" id="MobiDB-lite"/>
    </source>
</evidence>
<evidence type="ECO:0000269" key="3">
    <source ref="1"/>
</evidence>
<gene>
    <name type="primary">gtaK</name>
    <name type="synonym">amvA</name>
    <name type="ORF">DDB_G0282811</name>
</gene>
<protein>
    <recommendedName>
        <fullName>GATA zinc finger domain-containing protein 11</fullName>
    </recommendedName>
    <alternativeName>
        <fullName>Transcription factor amvA</fullName>
    </alternativeName>
</protein>
<sequence>MENKFLSGSSELFSSLYNNTNTNSNNNNNNNNNNNNNNNINNTTTTTTTTTSNNNLKNNFSNKNNFSFNNSSNSLSSSFGVPSSPPPQKLNNSGYNFNSSSYSSLVPNIKKRSNSLDDNMSVPTLQNFTNNNNNNNNNNNNNNNNNSNNNSSNNNNNNNNNNNFNNSPTSSPTPYVPTTPLINSYPSSPFLINQQPLSSSTPFPFNHQPYHIHPFTTLSLNNSNGINNNNHNNNHNNSNNNNNNNSNSNSNNHNNHNNNNQSIVPQSIHLQSTTPQIQPLSLQPPQQLPTINGPTSTPPSSSNSTTTTTTTTTTPSTNENSNNNNNSYNTNNNNKPEIQLIDSGAILECFIELRDLGSSISKQSKESMVSGDFANGLERIKVTLSTLTNKIETLDLSIQNIIQNEPRSRIFGNSSDESRVPVLTRPRRFRKSKVKSKENNHHNNNNNNINNININNNNCSTPLLQSPQLSSSSPSLNSSHDGDQHLSSPQLSSSTPQHKSNGNGNTNSTNNNKRKIGELKQCTSCGTTSSPEWRKGPAGNQSLCNACGLYFAKLVRREASLTWKPQSVVSVNDLLCAGKDQKQSNTTSQLTTFINSVEHNQQIFQQQQQQQQQQQQQQQQQQQQQQQQQNHHHQQLQQQQQQQQQQQLHH</sequence>